<protein>
    <recommendedName>
        <fullName>Nodulation protein A</fullName>
        <ecNumber>2.3.1.-</ecNumber>
    </recommendedName>
</protein>
<proteinExistence type="inferred from homology"/>
<accession>P72329</accession>
<evidence type="ECO:0000250" key="1"/>
<evidence type="ECO:0000305" key="2"/>
<dbReference type="EC" id="2.3.1.-"/>
<dbReference type="EMBL" id="U53327">
    <property type="protein sequence ID" value="AAB16892.1"/>
    <property type="molecule type" value="Genomic_DNA"/>
</dbReference>
<dbReference type="SMR" id="P72329"/>
<dbReference type="GO" id="GO:0005829">
    <property type="term" value="C:cytosol"/>
    <property type="evidence" value="ECO:0007669"/>
    <property type="project" value="InterPro"/>
</dbReference>
<dbReference type="GO" id="GO:0016746">
    <property type="term" value="F:acyltransferase activity"/>
    <property type="evidence" value="ECO:0007669"/>
    <property type="project" value="UniProtKB-UniRule"/>
</dbReference>
<dbReference type="Gene3D" id="3.40.630.30">
    <property type="match status" value="1"/>
</dbReference>
<dbReference type="HAMAP" id="MF_00084">
    <property type="entry name" value="NodA"/>
    <property type="match status" value="1"/>
</dbReference>
<dbReference type="InterPro" id="IPR003484">
    <property type="entry name" value="NodA"/>
</dbReference>
<dbReference type="InterPro" id="IPR020567">
    <property type="entry name" value="Nodulation_prot_NodA_CS"/>
</dbReference>
<dbReference type="NCBIfam" id="TIGR04245">
    <property type="entry name" value="nodulat_NodA"/>
    <property type="match status" value="1"/>
</dbReference>
<dbReference type="NCBIfam" id="NF001974">
    <property type="entry name" value="PRK00756.1"/>
    <property type="match status" value="1"/>
</dbReference>
<dbReference type="Pfam" id="PF02474">
    <property type="entry name" value="NodA"/>
    <property type="match status" value="1"/>
</dbReference>
<dbReference type="PROSITE" id="PS01349">
    <property type="entry name" value="NODA"/>
    <property type="match status" value="1"/>
</dbReference>
<keyword id="KW-0012">Acyltransferase</keyword>
<keyword id="KW-0963">Cytoplasm</keyword>
<keyword id="KW-0536">Nodulation</keyword>
<keyword id="KW-0808">Transferase</keyword>
<gene>
    <name type="primary">nodA</name>
</gene>
<sequence>MGSDVRWKLCWENELQLADHVELSDFFLKTYGRHGAFLAKPFEGGRTWAGARPEFRAIGYDAHGIAAHIGILRRFIKVGEVDLLVAEIGLYGVRPDLEGLGISFSLSVVYPLLQRMGVPFVFGTVRQAMRNHVERFCRGGLASIVSGVEVRSTLANIHPDLPPTRVEDVIVFVAPIGRSMDEWPSGTLIDRNGPEL</sequence>
<name>NODA_RHIS3</name>
<feature type="chain" id="PRO_0000196343" description="Nodulation protein A">
    <location>
        <begin position="1"/>
        <end position="196"/>
    </location>
</feature>
<organism>
    <name type="scientific">Rhizobium sp. (strain N33)</name>
    <dbReference type="NCBI Taxonomy" id="103798"/>
    <lineage>
        <taxon>Bacteria</taxon>
        <taxon>Pseudomonadati</taxon>
        <taxon>Pseudomonadota</taxon>
        <taxon>Alphaproteobacteria</taxon>
        <taxon>Hyphomicrobiales</taxon>
        <taxon>Rhizobiaceae</taxon>
        <taxon>Rhizobium/Agrobacterium group</taxon>
        <taxon>Rhizobium</taxon>
    </lineage>
</organism>
<comment type="function">
    <text evidence="1">N-acyltransferase required for nodulation. Acts in the production of a small, heat-stable compound (Nod) that stimulates mitosis in various plant protoplasts (By similarity).</text>
</comment>
<comment type="subcellular location">
    <subcellularLocation>
        <location evidence="1">Cytoplasm</location>
    </subcellularLocation>
</comment>
<comment type="similarity">
    <text evidence="2">Belongs to the NodA family.</text>
</comment>
<reference key="1">
    <citation type="journal article" date="1996" name="Mol. Plant Microbe Interact.">
        <title>Sequence and mutational analysis of the common nodBCIJ region of Rhizobium sp. (Oxytropis arctobia) strain N33, a nitrogen-fixing microsymbiont of both arctic and temperate legumes.</title>
        <authorList>
            <person name="Cloutier J."/>
            <person name="Laberge S."/>
            <person name="Prevost D."/>
            <person name="Antoun H."/>
        </authorList>
    </citation>
    <scope>NUCLEOTIDE SEQUENCE [GENOMIC DNA]</scope>
</reference>